<evidence type="ECO:0000250" key="1"/>
<evidence type="ECO:0000255" key="2">
    <source>
        <dbReference type="HAMAP-Rule" id="MF_00100"/>
    </source>
</evidence>
<evidence type="ECO:0000256" key="3">
    <source>
        <dbReference type="SAM" id="MobiDB-lite"/>
    </source>
</evidence>
<accession>A5F926</accession>
<accession>C3LXV4</accession>
<gene>
    <name evidence="2" type="primary">infB</name>
    <name type="ordered locus">VC0395_A0174</name>
    <name type="ordered locus">VC395_0660</name>
</gene>
<comment type="function">
    <text evidence="2">One of the essential components for the initiation of protein synthesis. Protects formylmethionyl-tRNA from spontaneous hydrolysis and promotes its binding to the 30S ribosomal subunits. Also involved in the hydrolysis of GTP during the formation of the 70S ribosomal complex.</text>
</comment>
<comment type="subcellular location">
    <subcellularLocation>
        <location evidence="2">Cytoplasm</location>
    </subcellularLocation>
</comment>
<comment type="similarity">
    <text evidence="2">Belongs to the TRAFAC class translation factor GTPase superfamily. Classic translation factor GTPase family. IF-2 subfamily.</text>
</comment>
<protein>
    <recommendedName>
        <fullName evidence="2">Translation initiation factor IF-2</fullName>
    </recommendedName>
</protein>
<sequence>MTQITVKALSEEIGTPVDRLLEQLADAGMNKAVADHVSEDEKQKLLAHLRKEHGDATGSEPTRLTLQRKTRSTLSVNAGGGKSKNVQVEVRKKRTYVKRSSVEDEATREAEEAAMRAAEEQAKREAEEAAQRAAEEKAKREAEEAAKREAEAKRMAEEKAKRETQAATQPRSDEEKLKQEAARKEAEALKRRQEEEARRKAEEESRRQLEKVRELAEKNGERWSADKETVGDMQENTDYHVTTSRYAREAEDEADLHEEGARRRSTKANKRKMSSRDDNQERDSRPRGGKAGRKGRINKPMSMQHGFDKTAVVAKADVVVGETIVVSELAQKMSVKATEVIKVMMKMGAMATINQVIDQETAQLVAEEMGHKVVLRKENELEEAILSDRDDKFEEVSRAPVVTIMGHVDHGKTSTLDYIRRTHVASGEAGGITQHIGAYHVETPNGMITFLDTPGHAAFTAMRARGAQATDIVVLVVAADDGVMPQTVEAIQHAKAAGVPLIVAVNKIDKDTANPDNVKTELSQYNVMPEEWGGDNMFVHISAKQGTNIDGLLEAILLQAEVLELKAVKQGMASGVVIESRLDKGRGPVATVLVQSGTLRKGDIVLCGQEYGRVRAMRDEVGNEVEEAGPSIPVEILGLSGVPAAGDEATVVRDERKAREVANYRAGKFREVKLARQQKSKLENMFSNMTAGDVAELNIVLKADVQGSVEAIADSLTKLSTDEVKVNIVGSGVGGITETDAVLAAASNAIVVGFNVRADASARRMIEAENIDLRYYSIIYQLIDEVKQAMSGMLSPEFKQEIIGLAEVRDVFKSPKLGAIAGCMVTEGVIKRNAPIRVLRDNVVIYEGELESLRRFKDDVAEVKNGYECGIGVKNYNDVRVGDQIEVFETIEIQRTID</sequence>
<name>IF2_VIBC3</name>
<proteinExistence type="inferred from homology"/>
<organism>
    <name type="scientific">Vibrio cholerae serotype O1 (strain ATCC 39541 / Classical Ogawa 395 / O395)</name>
    <dbReference type="NCBI Taxonomy" id="345073"/>
    <lineage>
        <taxon>Bacteria</taxon>
        <taxon>Pseudomonadati</taxon>
        <taxon>Pseudomonadota</taxon>
        <taxon>Gammaproteobacteria</taxon>
        <taxon>Vibrionales</taxon>
        <taxon>Vibrionaceae</taxon>
        <taxon>Vibrio</taxon>
    </lineage>
</organism>
<dbReference type="EMBL" id="CP000627">
    <property type="protein sequence ID" value="ABQ21647.1"/>
    <property type="molecule type" value="Genomic_DNA"/>
</dbReference>
<dbReference type="EMBL" id="CP001235">
    <property type="protein sequence ID" value="ACP08678.1"/>
    <property type="molecule type" value="Genomic_DNA"/>
</dbReference>
<dbReference type="RefSeq" id="WP_000192207.1">
    <property type="nucleotide sequence ID" value="NZ_JAACZH010000006.1"/>
</dbReference>
<dbReference type="SMR" id="A5F926"/>
<dbReference type="GeneID" id="69720601"/>
<dbReference type="KEGG" id="vco:VC0395_A0174"/>
<dbReference type="KEGG" id="vcr:VC395_0660"/>
<dbReference type="PATRIC" id="fig|345073.21.peg.641"/>
<dbReference type="eggNOG" id="COG0532">
    <property type="taxonomic scope" value="Bacteria"/>
</dbReference>
<dbReference type="HOGENOM" id="CLU_006301_6_3_6"/>
<dbReference type="OrthoDB" id="9811804at2"/>
<dbReference type="Proteomes" id="UP000000249">
    <property type="component" value="Chromosome 2"/>
</dbReference>
<dbReference type="GO" id="GO:0005829">
    <property type="term" value="C:cytosol"/>
    <property type="evidence" value="ECO:0007669"/>
    <property type="project" value="TreeGrafter"/>
</dbReference>
<dbReference type="GO" id="GO:0005525">
    <property type="term" value="F:GTP binding"/>
    <property type="evidence" value="ECO:0007669"/>
    <property type="project" value="UniProtKB-KW"/>
</dbReference>
<dbReference type="GO" id="GO:0003924">
    <property type="term" value="F:GTPase activity"/>
    <property type="evidence" value="ECO:0007669"/>
    <property type="project" value="UniProtKB-UniRule"/>
</dbReference>
<dbReference type="GO" id="GO:0097216">
    <property type="term" value="F:guanosine tetraphosphate binding"/>
    <property type="evidence" value="ECO:0007669"/>
    <property type="project" value="UniProtKB-ARBA"/>
</dbReference>
<dbReference type="GO" id="GO:0003743">
    <property type="term" value="F:translation initiation factor activity"/>
    <property type="evidence" value="ECO:0007669"/>
    <property type="project" value="UniProtKB-UniRule"/>
</dbReference>
<dbReference type="CDD" id="cd01887">
    <property type="entry name" value="IF2_eIF5B"/>
    <property type="match status" value="1"/>
</dbReference>
<dbReference type="CDD" id="cd03702">
    <property type="entry name" value="IF2_mtIF2_II"/>
    <property type="match status" value="1"/>
</dbReference>
<dbReference type="CDD" id="cd03692">
    <property type="entry name" value="mtIF2_IVc"/>
    <property type="match status" value="1"/>
</dbReference>
<dbReference type="FunFam" id="2.40.30.10:FF:000007">
    <property type="entry name" value="Translation initiation factor IF-2"/>
    <property type="match status" value="1"/>
</dbReference>
<dbReference type="FunFam" id="2.40.30.10:FF:000008">
    <property type="entry name" value="Translation initiation factor IF-2"/>
    <property type="match status" value="1"/>
</dbReference>
<dbReference type="FunFam" id="3.40.50.10050:FF:000001">
    <property type="entry name" value="Translation initiation factor IF-2"/>
    <property type="match status" value="1"/>
</dbReference>
<dbReference type="FunFam" id="3.40.50.300:FF:000019">
    <property type="entry name" value="Translation initiation factor IF-2"/>
    <property type="match status" value="1"/>
</dbReference>
<dbReference type="Gene3D" id="3.40.50.300">
    <property type="entry name" value="P-loop containing nucleotide triphosphate hydrolases"/>
    <property type="match status" value="1"/>
</dbReference>
<dbReference type="Gene3D" id="3.30.56.50">
    <property type="entry name" value="Putative DNA-binding domain, N-terminal subdomain of bacterial translation initiation factor IF2"/>
    <property type="match status" value="1"/>
</dbReference>
<dbReference type="Gene3D" id="2.40.30.10">
    <property type="entry name" value="Translation factors"/>
    <property type="match status" value="2"/>
</dbReference>
<dbReference type="Gene3D" id="3.40.50.10050">
    <property type="entry name" value="Translation initiation factor IF- 2, domain 3"/>
    <property type="match status" value="1"/>
</dbReference>
<dbReference type="HAMAP" id="MF_00100_B">
    <property type="entry name" value="IF_2_B"/>
    <property type="match status" value="1"/>
</dbReference>
<dbReference type="InterPro" id="IPR009061">
    <property type="entry name" value="DNA-bd_dom_put_sf"/>
</dbReference>
<dbReference type="InterPro" id="IPR053905">
    <property type="entry name" value="EF-G-like_DII"/>
</dbReference>
<dbReference type="InterPro" id="IPR004161">
    <property type="entry name" value="EFTu-like_2"/>
</dbReference>
<dbReference type="InterPro" id="IPR013575">
    <property type="entry name" value="IF2_assoc_dom_bac"/>
</dbReference>
<dbReference type="InterPro" id="IPR044145">
    <property type="entry name" value="IF2_II"/>
</dbReference>
<dbReference type="InterPro" id="IPR006847">
    <property type="entry name" value="IF2_N"/>
</dbReference>
<dbReference type="InterPro" id="IPR027417">
    <property type="entry name" value="P-loop_NTPase"/>
</dbReference>
<dbReference type="InterPro" id="IPR005225">
    <property type="entry name" value="Small_GTP-bd"/>
</dbReference>
<dbReference type="InterPro" id="IPR000795">
    <property type="entry name" value="T_Tr_GTP-bd_dom"/>
</dbReference>
<dbReference type="InterPro" id="IPR000178">
    <property type="entry name" value="TF_IF2_bacterial-like"/>
</dbReference>
<dbReference type="InterPro" id="IPR015760">
    <property type="entry name" value="TIF_IF2"/>
</dbReference>
<dbReference type="InterPro" id="IPR023115">
    <property type="entry name" value="TIF_IF2_dom3"/>
</dbReference>
<dbReference type="InterPro" id="IPR036925">
    <property type="entry name" value="TIF_IF2_dom3_sf"/>
</dbReference>
<dbReference type="InterPro" id="IPR009000">
    <property type="entry name" value="Transl_B-barrel_sf"/>
</dbReference>
<dbReference type="NCBIfam" id="TIGR00487">
    <property type="entry name" value="IF-2"/>
    <property type="match status" value="1"/>
</dbReference>
<dbReference type="NCBIfam" id="TIGR00231">
    <property type="entry name" value="small_GTP"/>
    <property type="match status" value="1"/>
</dbReference>
<dbReference type="PANTHER" id="PTHR43381:SF5">
    <property type="entry name" value="TR-TYPE G DOMAIN-CONTAINING PROTEIN"/>
    <property type="match status" value="1"/>
</dbReference>
<dbReference type="PANTHER" id="PTHR43381">
    <property type="entry name" value="TRANSLATION INITIATION FACTOR IF-2-RELATED"/>
    <property type="match status" value="1"/>
</dbReference>
<dbReference type="Pfam" id="PF22042">
    <property type="entry name" value="EF-G_D2"/>
    <property type="match status" value="1"/>
</dbReference>
<dbReference type="Pfam" id="PF00009">
    <property type="entry name" value="GTP_EFTU"/>
    <property type="match status" value="1"/>
</dbReference>
<dbReference type="Pfam" id="PF03144">
    <property type="entry name" value="GTP_EFTU_D2"/>
    <property type="match status" value="1"/>
</dbReference>
<dbReference type="Pfam" id="PF11987">
    <property type="entry name" value="IF-2"/>
    <property type="match status" value="1"/>
</dbReference>
<dbReference type="Pfam" id="PF08364">
    <property type="entry name" value="IF2_assoc"/>
    <property type="match status" value="1"/>
</dbReference>
<dbReference type="Pfam" id="PF04760">
    <property type="entry name" value="IF2_N"/>
    <property type="match status" value="2"/>
</dbReference>
<dbReference type="SUPFAM" id="SSF52156">
    <property type="entry name" value="Initiation factor IF2/eIF5b, domain 3"/>
    <property type="match status" value="1"/>
</dbReference>
<dbReference type="SUPFAM" id="SSF52540">
    <property type="entry name" value="P-loop containing nucleoside triphosphate hydrolases"/>
    <property type="match status" value="1"/>
</dbReference>
<dbReference type="SUPFAM" id="SSF46955">
    <property type="entry name" value="Putative DNA-binding domain"/>
    <property type="match status" value="1"/>
</dbReference>
<dbReference type="SUPFAM" id="SSF50447">
    <property type="entry name" value="Translation proteins"/>
    <property type="match status" value="2"/>
</dbReference>
<dbReference type="PROSITE" id="PS51722">
    <property type="entry name" value="G_TR_2"/>
    <property type="match status" value="1"/>
</dbReference>
<dbReference type="PROSITE" id="PS01176">
    <property type="entry name" value="IF2"/>
    <property type="match status" value="1"/>
</dbReference>
<reference key="1">
    <citation type="submission" date="2007-03" db="EMBL/GenBank/DDBJ databases">
        <authorList>
            <person name="Heidelberg J."/>
        </authorList>
    </citation>
    <scope>NUCLEOTIDE SEQUENCE [LARGE SCALE GENOMIC DNA]</scope>
    <source>
        <strain>ATCC 39541 / Classical Ogawa 395 / O395</strain>
    </source>
</reference>
<reference key="2">
    <citation type="journal article" date="2008" name="PLoS ONE">
        <title>A recalibrated molecular clock and independent origins for the cholera pandemic clones.</title>
        <authorList>
            <person name="Feng L."/>
            <person name="Reeves P.R."/>
            <person name="Lan R."/>
            <person name="Ren Y."/>
            <person name="Gao C."/>
            <person name="Zhou Z."/>
            <person name="Ren Y."/>
            <person name="Cheng J."/>
            <person name="Wang W."/>
            <person name="Wang J."/>
            <person name="Qian W."/>
            <person name="Li D."/>
            <person name="Wang L."/>
        </authorList>
    </citation>
    <scope>NUCLEOTIDE SEQUENCE [LARGE SCALE GENOMIC DNA]</scope>
    <source>
        <strain>ATCC 39541 / Classical Ogawa 395 / O395</strain>
    </source>
</reference>
<feature type="chain" id="PRO_1000071293" description="Translation initiation factor IF-2">
    <location>
        <begin position="1"/>
        <end position="898"/>
    </location>
</feature>
<feature type="domain" description="tr-type G">
    <location>
        <begin position="397"/>
        <end position="566"/>
    </location>
</feature>
<feature type="region of interest" description="Disordered" evidence="3">
    <location>
        <begin position="51"/>
        <end position="302"/>
    </location>
</feature>
<feature type="region of interest" description="G1" evidence="1">
    <location>
        <begin position="406"/>
        <end position="413"/>
    </location>
</feature>
<feature type="region of interest" description="G2" evidence="1">
    <location>
        <begin position="431"/>
        <end position="435"/>
    </location>
</feature>
<feature type="region of interest" description="G3" evidence="1">
    <location>
        <begin position="452"/>
        <end position="455"/>
    </location>
</feature>
<feature type="region of interest" description="G4" evidence="1">
    <location>
        <begin position="506"/>
        <end position="509"/>
    </location>
</feature>
<feature type="region of interest" description="G5" evidence="1">
    <location>
        <begin position="542"/>
        <end position="544"/>
    </location>
</feature>
<feature type="compositionally biased region" description="Basic and acidic residues" evidence="3">
    <location>
        <begin position="100"/>
        <end position="164"/>
    </location>
</feature>
<feature type="compositionally biased region" description="Basic and acidic residues" evidence="3">
    <location>
        <begin position="171"/>
        <end position="230"/>
    </location>
</feature>
<feature type="compositionally biased region" description="Polar residues" evidence="3">
    <location>
        <begin position="234"/>
        <end position="245"/>
    </location>
</feature>
<feature type="compositionally biased region" description="Basic residues" evidence="3">
    <location>
        <begin position="263"/>
        <end position="273"/>
    </location>
</feature>
<feature type="compositionally biased region" description="Basic and acidic residues" evidence="3">
    <location>
        <begin position="274"/>
        <end position="286"/>
    </location>
</feature>
<feature type="compositionally biased region" description="Basic residues" evidence="3">
    <location>
        <begin position="287"/>
        <end position="297"/>
    </location>
</feature>
<feature type="binding site" evidence="2">
    <location>
        <begin position="406"/>
        <end position="413"/>
    </location>
    <ligand>
        <name>GTP</name>
        <dbReference type="ChEBI" id="CHEBI:37565"/>
    </ligand>
</feature>
<feature type="binding site" evidence="2">
    <location>
        <begin position="452"/>
        <end position="456"/>
    </location>
    <ligand>
        <name>GTP</name>
        <dbReference type="ChEBI" id="CHEBI:37565"/>
    </ligand>
</feature>
<feature type="binding site" evidence="2">
    <location>
        <begin position="506"/>
        <end position="509"/>
    </location>
    <ligand>
        <name>GTP</name>
        <dbReference type="ChEBI" id="CHEBI:37565"/>
    </ligand>
</feature>
<keyword id="KW-0963">Cytoplasm</keyword>
<keyword id="KW-0342">GTP-binding</keyword>
<keyword id="KW-0396">Initiation factor</keyword>
<keyword id="KW-0547">Nucleotide-binding</keyword>
<keyword id="KW-0648">Protein biosynthesis</keyword>